<gene>
    <name type="ordered locus">RP439</name>
</gene>
<accession>Q9ZDA3</accession>
<sequence>MQDFNIESRSVLHMTAQIRAKQLAIRDAQNREQEAIVKTWEENGIDKSDETVSNDIVNSLETFYNISKSLNDYLKTQGINDIGYPIKFNKTDLQLKMALNYAKQQEDNLIDQIIKGKFYNGLSNDINSQELPVLQSDNMLSFWGNENSSVSSVLLASVAQILNIEPVPLVGAATNYKLHNPEYTLPQELIPEDYRFASQKGMLVFGDYQYGGHRTFEEQLVFGPEDCSSSVGKATYLSNEQIKSITTTQMKENYSKYDYKLITLLKDIVEPKQLELIEAGDIYVYKGHCAVIATKPDNKAEITTLEFSRNIDRAENKISGGGIYNYSLIDKAQEEPLNPIYILRKNLEPLPSQSSLKYFLSAIDEKYLNLYPEGPNEDVVGDCRIFFETQE</sequence>
<protein>
    <recommendedName>
        <fullName>Uncharacterized protein RP439</fullName>
    </recommendedName>
</protein>
<organism>
    <name type="scientific">Rickettsia prowazekii (strain Madrid E)</name>
    <dbReference type="NCBI Taxonomy" id="272947"/>
    <lineage>
        <taxon>Bacteria</taxon>
        <taxon>Pseudomonadati</taxon>
        <taxon>Pseudomonadota</taxon>
        <taxon>Alphaproteobacteria</taxon>
        <taxon>Rickettsiales</taxon>
        <taxon>Rickettsiaceae</taxon>
        <taxon>Rickettsieae</taxon>
        <taxon>Rickettsia</taxon>
        <taxon>typhus group</taxon>
    </lineage>
</organism>
<reference key="1">
    <citation type="journal article" date="1998" name="Nature">
        <title>The genome sequence of Rickettsia prowazekii and the origin of mitochondria.</title>
        <authorList>
            <person name="Andersson S.G.E."/>
            <person name="Zomorodipour A."/>
            <person name="Andersson J.O."/>
            <person name="Sicheritz-Ponten T."/>
            <person name="Alsmark U.C.M."/>
            <person name="Podowski R.M."/>
            <person name="Naeslund A.K."/>
            <person name="Eriksson A.-S."/>
            <person name="Winkler H.H."/>
            <person name="Kurland C.G."/>
        </authorList>
    </citation>
    <scope>NUCLEOTIDE SEQUENCE [LARGE SCALE GENOMIC DNA]</scope>
    <source>
        <strain>Madrid E</strain>
    </source>
</reference>
<name>Y439_RICPR</name>
<proteinExistence type="predicted"/>
<feature type="chain" id="PRO_0000101372" description="Uncharacterized protein RP439">
    <location>
        <begin position="1"/>
        <end position="391"/>
    </location>
</feature>
<keyword id="KW-1185">Reference proteome</keyword>
<dbReference type="EMBL" id="AJ235271">
    <property type="protein sequence ID" value="CAA14896.1"/>
    <property type="molecule type" value="Genomic_DNA"/>
</dbReference>
<dbReference type="PIR" id="F71702">
    <property type="entry name" value="F71702"/>
</dbReference>
<dbReference type="RefSeq" id="NP_220820.1">
    <property type="nucleotide sequence ID" value="NC_000963.1"/>
</dbReference>
<dbReference type="RefSeq" id="WP_004599472.1">
    <property type="nucleotide sequence ID" value="NC_000963.1"/>
</dbReference>
<dbReference type="SMR" id="Q9ZDA3"/>
<dbReference type="STRING" id="272947.gene:17555519"/>
<dbReference type="EnsemblBacteria" id="CAA14896">
    <property type="protein sequence ID" value="CAA14896"/>
    <property type="gene ID" value="CAA14896"/>
</dbReference>
<dbReference type="KEGG" id="rpr:RP439"/>
<dbReference type="PATRIC" id="fig|272947.5.peg.452"/>
<dbReference type="eggNOG" id="ENOG503469Q">
    <property type="taxonomic scope" value="Bacteria"/>
</dbReference>
<dbReference type="HOGENOM" id="CLU_056534_0_0_5"/>
<dbReference type="OrthoDB" id="7160872at2"/>
<dbReference type="Proteomes" id="UP000002480">
    <property type="component" value="Chromosome"/>
</dbReference>